<name>RS4_EHRRG</name>
<gene>
    <name evidence="1" type="primary">rpsD</name>
    <name type="ordered locus">ERGA_CDS_01900</name>
</gene>
<feature type="chain" id="PRO_0000293274" description="Small ribosomal subunit protein uS4">
    <location>
        <begin position="1"/>
        <end position="202"/>
    </location>
</feature>
<feature type="domain" description="S4 RNA-binding" evidence="1">
    <location>
        <begin position="91"/>
        <end position="154"/>
    </location>
</feature>
<accession>Q5FH70</accession>
<organism>
    <name type="scientific">Ehrlichia ruminantium (strain Gardel)</name>
    <dbReference type="NCBI Taxonomy" id="302409"/>
    <lineage>
        <taxon>Bacteria</taxon>
        <taxon>Pseudomonadati</taxon>
        <taxon>Pseudomonadota</taxon>
        <taxon>Alphaproteobacteria</taxon>
        <taxon>Rickettsiales</taxon>
        <taxon>Anaplasmataceae</taxon>
        <taxon>Ehrlichia</taxon>
    </lineage>
</organism>
<reference key="1">
    <citation type="journal article" date="2006" name="J. Bacteriol.">
        <title>Comparative genomic analysis of three strains of Ehrlichia ruminantium reveals an active process of genome size plasticity.</title>
        <authorList>
            <person name="Frutos R."/>
            <person name="Viari A."/>
            <person name="Ferraz C."/>
            <person name="Morgat A."/>
            <person name="Eychenie S."/>
            <person name="Kandassamy Y."/>
            <person name="Chantal I."/>
            <person name="Bensaid A."/>
            <person name="Coissac E."/>
            <person name="Vachiery N."/>
            <person name="Demaille J."/>
            <person name="Martinez D."/>
        </authorList>
    </citation>
    <scope>NUCLEOTIDE SEQUENCE [LARGE SCALE GENOMIC DNA]</scope>
    <source>
        <strain>Gardel</strain>
    </source>
</reference>
<sequence>MVIQRKYRASRRLGVSLWGRSKDPFNTRNYPPGQHGNMGYKKPSDFGKQFGAHKKFKFYYAISSKQMRNMFLKAYKKKGDTGDNFVGLLESMLSSVLYNSGLVPTIFSARQLISHKHVLVNGKVVNISSYSVKPGDTIKLREKAVNLPSVLAAIDAQEQKVPDYLEVDVKERSVKYLRVPKYYEVPYPANMEVNLVIEFYSR</sequence>
<proteinExistence type="inferred from homology"/>
<comment type="function">
    <text evidence="1">One of the primary rRNA binding proteins, it binds directly to 16S rRNA where it nucleates assembly of the body of the 30S subunit.</text>
</comment>
<comment type="function">
    <text evidence="1">With S5 and S12 plays an important role in translational accuracy.</text>
</comment>
<comment type="subunit">
    <text evidence="1">Part of the 30S ribosomal subunit. Contacts protein S5. The interaction surface between S4 and S5 is involved in control of translational fidelity.</text>
</comment>
<comment type="similarity">
    <text evidence="1">Belongs to the universal ribosomal protein uS4 family.</text>
</comment>
<dbReference type="EMBL" id="CR925677">
    <property type="protein sequence ID" value="CAI27642.1"/>
    <property type="molecule type" value="Genomic_DNA"/>
</dbReference>
<dbReference type="RefSeq" id="WP_011255365.1">
    <property type="nucleotide sequence ID" value="NC_006831.1"/>
</dbReference>
<dbReference type="SMR" id="Q5FH70"/>
<dbReference type="KEGG" id="erg:ERGA_CDS_01900"/>
<dbReference type="HOGENOM" id="CLU_092403_0_0_5"/>
<dbReference type="OrthoDB" id="9803672at2"/>
<dbReference type="Proteomes" id="UP000000533">
    <property type="component" value="Chromosome"/>
</dbReference>
<dbReference type="GO" id="GO:0015935">
    <property type="term" value="C:small ribosomal subunit"/>
    <property type="evidence" value="ECO:0007669"/>
    <property type="project" value="InterPro"/>
</dbReference>
<dbReference type="GO" id="GO:0019843">
    <property type="term" value="F:rRNA binding"/>
    <property type="evidence" value="ECO:0007669"/>
    <property type="project" value="UniProtKB-UniRule"/>
</dbReference>
<dbReference type="GO" id="GO:0003735">
    <property type="term" value="F:structural constituent of ribosome"/>
    <property type="evidence" value="ECO:0007669"/>
    <property type="project" value="InterPro"/>
</dbReference>
<dbReference type="GO" id="GO:0042274">
    <property type="term" value="P:ribosomal small subunit biogenesis"/>
    <property type="evidence" value="ECO:0007669"/>
    <property type="project" value="TreeGrafter"/>
</dbReference>
<dbReference type="GO" id="GO:0006412">
    <property type="term" value="P:translation"/>
    <property type="evidence" value="ECO:0007669"/>
    <property type="project" value="UniProtKB-UniRule"/>
</dbReference>
<dbReference type="CDD" id="cd00165">
    <property type="entry name" value="S4"/>
    <property type="match status" value="1"/>
</dbReference>
<dbReference type="FunFam" id="3.10.290.10:FF:000001">
    <property type="entry name" value="30S ribosomal protein S4"/>
    <property type="match status" value="1"/>
</dbReference>
<dbReference type="Gene3D" id="1.10.1050.10">
    <property type="entry name" value="Ribosomal Protein S4 Delta 41, Chain A, domain 1"/>
    <property type="match status" value="1"/>
</dbReference>
<dbReference type="Gene3D" id="3.10.290.10">
    <property type="entry name" value="RNA-binding S4 domain"/>
    <property type="match status" value="1"/>
</dbReference>
<dbReference type="HAMAP" id="MF_01306_B">
    <property type="entry name" value="Ribosomal_uS4_B"/>
    <property type="match status" value="1"/>
</dbReference>
<dbReference type="InterPro" id="IPR022801">
    <property type="entry name" value="Ribosomal_uS4"/>
</dbReference>
<dbReference type="InterPro" id="IPR005709">
    <property type="entry name" value="Ribosomal_uS4_bac-type"/>
</dbReference>
<dbReference type="InterPro" id="IPR001912">
    <property type="entry name" value="Ribosomal_uS4_N"/>
</dbReference>
<dbReference type="InterPro" id="IPR002942">
    <property type="entry name" value="S4_RNA-bd"/>
</dbReference>
<dbReference type="InterPro" id="IPR036986">
    <property type="entry name" value="S4_RNA-bd_sf"/>
</dbReference>
<dbReference type="NCBIfam" id="NF003717">
    <property type="entry name" value="PRK05327.1"/>
    <property type="match status" value="1"/>
</dbReference>
<dbReference type="NCBIfam" id="TIGR01017">
    <property type="entry name" value="rpsD_bact"/>
    <property type="match status" value="1"/>
</dbReference>
<dbReference type="PANTHER" id="PTHR11831">
    <property type="entry name" value="30S 40S RIBOSOMAL PROTEIN"/>
    <property type="match status" value="1"/>
</dbReference>
<dbReference type="PANTHER" id="PTHR11831:SF4">
    <property type="entry name" value="SMALL RIBOSOMAL SUBUNIT PROTEIN US4M"/>
    <property type="match status" value="1"/>
</dbReference>
<dbReference type="Pfam" id="PF00163">
    <property type="entry name" value="Ribosomal_S4"/>
    <property type="match status" value="1"/>
</dbReference>
<dbReference type="Pfam" id="PF01479">
    <property type="entry name" value="S4"/>
    <property type="match status" value="1"/>
</dbReference>
<dbReference type="SMART" id="SM01390">
    <property type="entry name" value="Ribosomal_S4"/>
    <property type="match status" value="1"/>
</dbReference>
<dbReference type="SMART" id="SM00363">
    <property type="entry name" value="S4"/>
    <property type="match status" value="1"/>
</dbReference>
<dbReference type="SUPFAM" id="SSF55174">
    <property type="entry name" value="Alpha-L RNA-binding motif"/>
    <property type="match status" value="1"/>
</dbReference>
<dbReference type="PROSITE" id="PS50889">
    <property type="entry name" value="S4"/>
    <property type="match status" value="1"/>
</dbReference>
<keyword id="KW-0687">Ribonucleoprotein</keyword>
<keyword id="KW-0689">Ribosomal protein</keyword>
<keyword id="KW-0694">RNA-binding</keyword>
<keyword id="KW-0699">rRNA-binding</keyword>
<evidence type="ECO:0000255" key="1">
    <source>
        <dbReference type="HAMAP-Rule" id="MF_01306"/>
    </source>
</evidence>
<evidence type="ECO:0000305" key="2"/>
<protein>
    <recommendedName>
        <fullName evidence="1">Small ribosomal subunit protein uS4</fullName>
    </recommendedName>
    <alternativeName>
        <fullName evidence="2">30S ribosomal protein S4</fullName>
    </alternativeName>
</protein>